<accession>P58915</accession>
<reference key="1">
    <citation type="journal article" date="1995" name="Int. J. Pept. Protein Res.">
        <title>Determination of disulfide bridge pattern in omega-conopeptides.</title>
        <authorList>
            <person name="Chung D."/>
            <person name="Gaur S."/>
            <person name="Bell J.R."/>
            <person name="Ramachandran J."/>
            <person name="Nadasdi L."/>
        </authorList>
    </citation>
    <scope>PROTEIN SEQUENCE</scope>
    <scope>HYDROXYLATION AT PRO-4; PRO-10 AND PRO-21</scope>
    <scope>SYNTHESIS</scope>
    <scope>DISULFIDE BONDS</scope>
</reference>
<reference key="2">
    <citation type="patent" date="1991-09-24" number="US5051403">
        <title>Method of treating ischemia-related neuronal damage.</title>
        <authorList>
            <person name="Miljanich G.P."/>
            <person name="Bitner R.S."/>
            <person name="Bowersox S.S."/>
            <person name="Fox J.A."/>
            <person name="Valentino K.L."/>
            <person name="Yamashiro D.H."/>
        </authorList>
    </citation>
    <scope>PROTEIN SEQUENCE OF 1-16</scope>
</reference>
<reference key="3">
    <citation type="journal article" date="1995" name="Annu. Rev. Pharmacol. Toxicol.">
        <title>Antagonists of neuronal calcium channels: structure, function, and therapeutic implications.</title>
        <authorList>
            <person name="Miljanich G.P."/>
            <person name="Ramachandran J."/>
        </authorList>
    </citation>
    <scope>REVIEW</scope>
</reference>
<name>O16A_CONTU</name>
<feature type="peptide" id="PRO_0000044480" description="Omega-conotoxin TVIA">
    <location>
        <begin position="1"/>
        <end position="26"/>
    </location>
</feature>
<feature type="modified residue" description="4-hydroxyproline" evidence="1">
    <location>
        <position position="4"/>
    </location>
</feature>
<feature type="modified residue" description="4-hydroxyproline" evidence="1">
    <location>
        <position position="10"/>
    </location>
</feature>
<feature type="modified residue" description="4-hydroxyproline" evidence="1">
    <location>
        <position position="21"/>
    </location>
</feature>
<feature type="disulfide bond" evidence="1">
    <location>
        <begin position="1"/>
        <end position="16"/>
    </location>
</feature>
<feature type="disulfide bond" evidence="1">
    <location>
        <begin position="8"/>
        <end position="19"/>
    </location>
</feature>
<feature type="disulfide bond" evidence="1">
    <location>
        <begin position="15"/>
        <end position="26"/>
    </location>
</feature>
<sequence length="26" mass="2804">CLSPGSSCSPTSYNCCRSCNPYSRKC</sequence>
<keyword id="KW-0108">Calcium channel impairing toxin</keyword>
<keyword id="KW-0903">Direct protein sequencing</keyword>
<keyword id="KW-1015">Disulfide bond</keyword>
<keyword id="KW-0379">Hydroxylation</keyword>
<keyword id="KW-0872">Ion channel impairing toxin</keyword>
<keyword id="KW-0960">Knottin</keyword>
<keyword id="KW-0528">Neurotoxin</keyword>
<keyword id="KW-0638">Presynaptic neurotoxin</keyword>
<keyword id="KW-0964">Secreted</keyword>
<keyword id="KW-0800">Toxin</keyword>
<keyword id="KW-1218">Voltage-gated calcium channel impairing toxin</keyword>
<dbReference type="SMR" id="P58915"/>
<dbReference type="ConoServer" id="1727">
    <property type="toxin name" value="TVIA"/>
</dbReference>
<dbReference type="GO" id="GO:0005576">
    <property type="term" value="C:extracellular region"/>
    <property type="evidence" value="ECO:0007669"/>
    <property type="project" value="UniProtKB-SubCell"/>
</dbReference>
<dbReference type="GO" id="GO:0044231">
    <property type="term" value="C:host cell presynaptic membrane"/>
    <property type="evidence" value="ECO:0007669"/>
    <property type="project" value="UniProtKB-KW"/>
</dbReference>
<dbReference type="GO" id="GO:0005246">
    <property type="term" value="F:calcium channel regulator activity"/>
    <property type="evidence" value="ECO:0007669"/>
    <property type="project" value="UniProtKB-KW"/>
</dbReference>
<dbReference type="GO" id="GO:0008200">
    <property type="term" value="F:ion channel inhibitor activity"/>
    <property type="evidence" value="ECO:0007669"/>
    <property type="project" value="InterPro"/>
</dbReference>
<dbReference type="GO" id="GO:0090729">
    <property type="term" value="F:toxin activity"/>
    <property type="evidence" value="ECO:0007669"/>
    <property type="project" value="UniProtKB-KW"/>
</dbReference>
<dbReference type="InterPro" id="IPR012321">
    <property type="entry name" value="Conotoxin_omega-typ_CS"/>
</dbReference>
<dbReference type="SUPFAM" id="SSF57059">
    <property type="entry name" value="omega toxin-like"/>
    <property type="match status" value="1"/>
</dbReference>
<dbReference type="PROSITE" id="PS60004">
    <property type="entry name" value="OMEGA_CONOTOXIN"/>
    <property type="match status" value="1"/>
</dbReference>
<protein>
    <recommendedName>
        <fullName>Omega-conotoxin TVIA</fullName>
    </recommendedName>
    <alternativeName>
        <fullName>SNX-185</fullName>
    </alternativeName>
</protein>
<proteinExistence type="evidence at protein level"/>
<organism>
    <name type="scientific">Conus tulipa</name>
    <name type="common">Fish-hunting cone snail</name>
    <name type="synonym">Tulip cone</name>
    <dbReference type="NCBI Taxonomy" id="6495"/>
    <lineage>
        <taxon>Eukaryota</taxon>
        <taxon>Metazoa</taxon>
        <taxon>Spiralia</taxon>
        <taxon>Lophotrochozoa</taxon>
        <taxon>Mollusca</taxon>
        <taxon>Gastropoda</taxon>
        <taxon>Caenogastropoda</taxon>
        <taxon>Neogastropoda</taxon>
        <taxon>Conoidea</taxon>
        <taxon>Conidae</taxon>
        <taxon>Conus</taxon>
        <taxon>Gastridium</taxon>
    </lineage>
</organism>
<comment type="function">
    <text>Omega-conotoxins act at presynaptic membranes, they bind and block voltage-gated calcium channels (Cav).</text>
</comment>
<comment type="subcellular location">
    <subcellularLocation>
        <location>Secreted</location>
    </subcellularLocation>
</comment>
<comment type="tissue specificity">
    <text>Expressed by the venom duct.</text>
</comment>
<comment type="domain">
    <text>The presence of a 'disulfide through disulfide knot' structurally defines this protein as a knottin.</text>
</comment>
<comment type="domain">
    <text>The cysteine framework is VI/VII (C-C-CC-C-C).</text>
</comment>
<comment type="similarity">
    <text evidence="2">Belongs to the conotoxin O1 superfamily.</text>
</comment>
<evidence type="ECO:0000269" key="1">
    <source>
    </source>
</evidence>
<evidence type="ECO:0000305" key="2"/>